<evidence type="ECO:0000250" key="1"/>
<evidence type="ECO:0000250" key="2">
    <source>
        <dbReference type="UniProtKB" id="Q3U0S6"/>
    </source>
</evidence>
<evidence type="ECO:0000255" key="3">
    <source>
        <dbReference type="PROSITE-ProRule" id="PRU00166"/>
    </source>
</evidence>
<evidence type="ECO:0000255" key="4">
    <source>
        <dbReference type="PROSITE-ProRule" id="PRU00503"/>
    </source>
</evidence>
<evidence type="ECO:0000256" key="5">
    <source>
        <dbReference type="SAM" id="MobiDB-lite"/>
    </source>
</evidence>
<evidence type="ECO:0000269" key="6">
    <source>
    </source>
</evidence>
<evidence type="ECO:0000269" key="7">
    <source>
    </source>
</evidence>
<evidence type="ECO:0000305" key="8"/>
<evidence type="ECO:0007744" key="9">
    <source>
    </source>
</evidence>
<evidence type="ECO:0007829" key="10">
    <source>
        <dbReference type="PDB" id="5KHO"/>
    </source>
</evidence>
<organism>
    <name type="scientific">Homo sapiens</name>
    <name type="common">Human</name>
    <dbReference type="NCBI Taxonomy" id="9606"/>
    <lineage>
        <taxon>Eukaryota</taxon>
        <taxon>Metazoa</taxon>
        <taxon>Chordata</taxon>
        <taxon>Craniata</taxon>
        <taxon>Vertebrata</taxon>
        <taxon>Euteleostomi</taxon>
        <taxon>Mammalia</taxon>
        <taxon>Eutheria</taxon>
        <taxon>Euarchontoglires</taxon>
        <taxon>Primates</taxon>
        <taxon>Haplorrhini</taxon>
        <taxon>Catarrhini</taxon>
        <taxon>Hominidae</taxon>
        <taxon>Homo</taxon>
    </lineage>
</organism>
<dbReference type="EMBL" id="AY378097">
    <property type="protein sequence ID" value="AAR24580.1"/>
    <property type="molecule type" value="mRNA"/>
</dbReference>
<dbReference type="EMBL" id="BC028614">
    <property type="protein sequence ID" value="AAH28614.1"/>
    <property type="molecule type" value="mRNA"/>
</dbReference>
<dbReference type="CCDS" id="CCDS12731.1"/>
<dbReference type="RefSeq" id="NP_060275.2">
    <property type="nucleotide sequence ID" value="NM_017805.2"/>
</dbReference>
<dbReference type="PDB" id="5KHO">
    <property type="method" value="X-ray"/>
    <property type="resolution" value="2.78 A"/>
    <property type="chains" value="A/B=134-285"/>
</dbReference>
<dbReference type="PDB" id="5KHQ">
    <property type="method" value="X-ray"/>
    <property type="resolution" value="2.80 A"/>
    <property type="chains" value="A/B=134-285"/>
</dbReference>
<dbReference type="PDBsum" id="5KHO"/>
<dbReference type="PDBsum" id="5KHQ"/>
<dbReference type="SMR" id="Q5U651"/>
<dbReference type="BioGRID" id="120263">
    <property type="interactions" value="20"/>
</dbReference>
<dbReference type="DIP" id="DIP-29457N"/>
<dbReference type="FunCoup" id="Q5U651">
    <property type="interactions" value="367"/>
</dbReference>
<dbReference type="IntAct" id="Q5U651">
    <property type="interactions" value="19"/>
</dbReference>
<dbReference type="STRING" id="9606.ENSP00000222145"/>
<dbReference type="GlyGen" id="Q5U651">
    <property type="glycosylation" value="5 sites, 1 O-linked glycan (3 sites)"/>
</dbReference>
<dbReference type="iPTMnet" id="Q5U651"/>
<dbReference type="PhosphoSitePlus" id="Q5U651"/>
<dbReference type="BioMuta" id="RASIP1"/>
<dbReference type="DMDM" id="74736209"/>
<dbReference type="jPOST" id="Q5U651"/>
<dbReference type="MassIVE" id="Q5U651"/>
<dbReference type="PaxDb" id="9606-ENSP00000222145"/>
<dbReference type="PeptideAtlas" id="Q5U651"/>
<dbReference type="ProteomicsDB" id="65240"/>
<dbReference type="Antibodypedia" id="31787">
    <property type="antibodies" value="108 antibodies from 30 providers"/>
</dbReference>
<dbReference type="DNASU" id="54922"/>
<dbReference type="Ensembl" id="ENST00000222145.9">
    <property type="protein sequence ID" value="ENSP00000222145.3"/>
    <property type="gene ID" value="ENSG00000105538.10"/>
</dbReference>
<dbReference type="GeneID" id="54922"/>
<dbReference type="KEGG" id="hsa:54922"/>
<dbReference type="MANE-Select" id="ENST00000222145.9">
    <property type="protein sequence ID" value="ENSP00000222145.3"/>
    <property type="RefSeq nucleotide sequence ID" value="NM_017805.3"/>
    <property type="RefSeq protein sequence ID" value="NP_060275.2"/>
</dbReference>
<dbReference type="UCSC" id="uc002pki.4">
    <property type="organism name" value="human"/>
</dbReference>
<dbReference type="AGR" id="HGNC:24716"/>
<dbReference type="CTD" id="54922"/>
<dbReference type="DisGeNET" id="54922"/>
<dbReference type="GeneCards" id="RASIP1"/>
<dbReference type="HGNC" id="HGNC:24716">
    <property type="gene designation" value="RASIP1"/>
</dbReference>
<dbReference type="HPA" id="ENSG00000105538">
    <property type="expression patterns" value="Low tissue specificity"/>
</dbReference>
<dbReference type="MIM" id="609623">
    <property type="type" value="gene"/>
</dbReference>
<dbReference type="neXtProt" id="NX_Q5U651"/>
<dbReference type="OpenTargets" id="ENSG00000105538"/>
<dbReference type="PharmGKB" id="PA134875519"/>
<dbReference type="VEuPathDB" id="HostDB:ENSG00000105538"/>
<dbReference type="eggNOG" id="KOG0160">
    <property type="taxonomic scope" value="Eukaryota"/>
</dbReference>
<dbReference type="GeneTree" id="ENSGT00940000160072"/>
<dbReference type="HOGENOM" id="CLU_010386_1_0_1"/>
<dbReference type="InParanoid" id="Q5U651"/>
<dbReference type="OMA" id="MRPATKN"/>
<dbReference type="OrthoDB" id="3908708at2759"/>
<dbReference type="PAN-GO" id="Q5U651">
    <property type="GO annotations" value="6 GO annotations based on evolutionary models"/>
</dbReference>
<dbReference type="PhylomeDB" id="Q5U651"/>
<dbReference type="TreeFam" id="TF315987"/>
<dbReference type="PathwayCommons" id="Q5U651"/>
<dbReference type="SignaLink" id="Q5U651"/>
<dbReference type="BioGRID-ORCS" id="54922">
    <property type="hits" value="12 hits in 1149 CRISPR screens"/>
</dbReference>
<dbReference type="ChiTaRS" id="RASIP1">
    <property type="organism name" value="human"/>
</dbReference>
<dbReference type="GenomeRNAi" id="54922"/>
<dbReference type="Pharos" id="Q5U651">
    <property type="development level" value="Tbio"/>
</dbReference>
<dbReference type="PRO" id="PR:Q5U651"/>
<dbReference type="Proteomes" id="UP000005640">
    <property type="component" value="Chromosome 19"/>
</dbReference>
<dbReference type="RNAct" id="Q5U651">
    <property type="molecule type" value="protein"/>
</dbReference>
<dbReference type="Bgee" id="ENSG00000105538">
    <property type="expression patterns" value="Expressed in right lung and 141 other cell types or tissues"/>
</dbReference>
<dbReference type="ExpressionAtlas" id="Q5U651">
    <property type="expression patterns" value="baseline and differential"/>
</dbReference>
<dbReference type="GO" id="GO:0005911">
    <property type="term" value="C:cell-cell junction"/>
    <property type="evidence" value="ECO:0000315"/>
    <property type="project" value="UniProtKB"/>
</dbReference>
<dbReference type="GO" id="GO:0005795">
    <property type="term" value="C:Golgi stack"/>
    <property type="evidence" value="ECO:0007669"/>
    <property type="project" value="UniProtKB-SubCell"/>
</dbReference>
<dbReference type="GO" id="GO:0048471">
    <property type="term" value="C:perinuclear region of cytoplasm"/>
    <property type="evidence" value="ECO:0007669"/>
    <property type="project" value="UniProtKB-SubCell"/>
</dbReference>
<dbReference type="GO" id="GO:0032991">
    <property type="term" value="C:protein-containing complex"/>
    <property type="evidence" value="ECO:0000314"/>
    <property type="project" value="UniProtKB"/>
</dbReference>
<dbReference type="GO" id="GO:0051020">
    <property type="term" value="F:GTPase binding"/>
    <property type="evidence" value="ECO:0000353"/>
    <property type="project" value="UniProtKB"/>
</dbReference>
<dbReference type="GO" id="GO:0042803">
    <property type="term" value="F:protein homodimerization activity"/>
    <property type="evidence" value="ECO:0000314"/>
    <property type="project" value="UniProtKB"/>
</dbReference>
<dbReference type="GO" id="GO:0001525">
    <property type="term" value="P:angiogenesis"/>
    <property type="evidence" value="ECO:0000250"/>
    <property type="project" value="UniProtKB"/>
</dbReference>
<dbReference type="GO" id="GO:0048754">
    <property type="term" value="P:branching morphogenesis of an epithelial tube"/>
    <property type="evidence" value="ECO:0000250"/>
    <property type="project" value="UniProtKB"/>
</dbReference>
<dbReference type="GO" id="GO:0010507">
    <property type="term" value="P:negative regulation of autophagy"/>
    <property type="evidence" value="ECO:0000315"/>
    <property type="project" value="BHF-UCL"/>
</dbReference>
<dbReference type="GO" id="GO:1905709">
    <property type="term" value="P:negative regulation of membrane permeability"/>
    <property type="evidence" value="ECO:0000314"/>
    <property type="project" value="UniProtKB"/>
</dbReference>
<dbReference type="GO" id="GO:0035024">
    <property type="term" value="P:negative regulation of Rho protein signal transduction"/>
    <property type="evidence" value="ECO:0000315"/>
    <property type="project" value="UniProtKB"/>
</dbReference>
<dbReference type="GO" id="GO:2000299">
    <property type="term" value="P:negative regulation of Rho-dependent protein serine/threonine kinase activity"/>
    <property type="evidence" value="ECO:0000315"/>
    <property type="project" value="UniProtKB"/>
</dbReference>
<dbReference type="GO" id="GO:0033625">
    <property type="term" value="P:positive regulation of integrin activation"/>
    <property type="evidence" value="ECO:0000315"/>
    <property type="project" value="UniProtKB"/>
</dbReference>
<dbReference type="GO" id="GO:0043087">
    <property type="term" value="P:regulation of GTPase activity"/>
    <property type="evidence" value="ECO:0000250"/>
    <property type="project" value="UniProtKB"/>
</dbReference>
<dbReference type="GO" id="GO:0007165">
    <property type="term" value="P:signal transduction"/>
    <property type="evidence" value="ECO:0007669"/>
    <property type="project" value="InterPro"/>
</dbReference>
<dbReference type="GO" id="GO:0001570">
    <property type="term" value="P:vasculogenesis"/>
    <property type="evidence" value="ECO:0000250"/>
    <property type="project" value="UniProtKB"/>
</dbReference>
<dbReference type="CDD" id="cd22734">
    <property type="entry name" value="FHA_RAIN"/>
    <property type="match status" value="1"/>
</dbReference>
<dbReference type="CDD" id="cd15472">
    <property type="entry name" value="Myo5p-like_CBD_Rasip1"/>
    <property type="match status" value="1"/>
</dbReference>
<dbReference type="CDD" id="cd17116">
    <property type="entry name" value="RA_Radil_like"/>
    <property type="match status" value="1"/>
</dbReference>
<dbReference type="DisProt" id="DP02731"/>
<dbReference type="FunFam" id="2.60.200.20:FF:000036">
    <property type="entry name" value="Ras interacting protein 1"/>
    <property type="match status" value="1"/>
</dbReference>
<dbReference type="FunFam" id="3.10.20.90:FF:000257">
    <property type="entry name" value="Ras interacting protein 1"/>
    <property type="match status" value="1"/>
</dbReference>
<dbReference type="Gene3D" id="2.60.200.20">
    <property type="match status" value="1"/>
</dbReference>
<dbReference type="Gene3D" id="3.10.20.90">
    <property type="entry name" value="Phosphatidylinositol 3-kinase Catalytic Subunit, Chain A, domain 1"/>
    <property type="match status" value="1"/>
</dbReference>
<dbReference type="InterPro" id="IPR037983">
    <property type="entry name" value="CBD_Rasip1/Radil"/>
</dbReference>
<dbReference type="InterPro" id="IPR002710">
    <property type="entry name" value="Dilute_dom"/>
</dbReference>
<dbReference type="InterPro" id="IPR000159">
    <property type="entry name" value="RA_dom"/>
</dbReference>
<dbReference type="InterPro" id="IPR008984">
    <property type="entry name" value="SMAD_FHA_dom_sf"/>
</dbReference>
<dbReference type="InterPro" id="IPR029071">
    <property type="entry name" value="Ubiquitin-like_domsf"/>
</dbReference>
<dbReference type="InterPro" id="IPR052072">
    <property type="entry name" value="Vascular_dev_regulator"/>
</dbReference>
<dbReference type="PANTHER" id="PTHR16027">
    <property type="entry name" value="DILUTE DOMAIN-CONTAINING PROTEIN YPR089W"/>
    <property type="match status" value="1"/>
</dbReference>
<dbReference type="PANTHER" id="PTHR16027:SF4">
    <property type="entry name" value="RAS-INTERACTING PROTEIN 1"/>
    <property type="match status" value="1"/>
</dbReference>
<dbReference type="Pfam" id="PF01843">
    <property type="entry name" value="DIL"/>
    <property type="match status" value="1"/>
</dbReference>
<dbReference type="Pfam" id="PF00788">
    <property type="entry name" value="RA"/>
    <property type="match status" value="1"/>
</dbReference>
<dbReference type="SMART" id="SM01132">
    <property type="entry name" value="DIL"/>
    <property type="match status" value="1"/>
</dbReference>
<dbReference type="SMART" id="SM00314">
    <property type="entry name" value="RA"/>
    <property type="match status" value="1"/>
</dbReference>
<dbReference type="SUPFAM" id="SSF49879">
    <property type="entry name" value="SMAD/FHA domain"/>
    <property type="match status" value="1"/>
</dbReference>
<dbReference type="SUPFAM" id="SSF54236">
    <property type="entry name" value="Ubiquitin-like"/>
    <property type="match status" value="1"/>
</dbReference>
<dbReference type="PROSITE" id="PS51126">
    <property type="entry name" value="DILUTE"/>
    <property type="match status" value="1"/>
</dbReference>
<dbReference type="PROSITE" id="PS50200">
    <property type="entry name" value="RA"/>
    <property type="match status" value="1"/>
</dbReference>
<reference key="1">
    <citation type="journal article" date="2004" name="J. Biol. Chem.">
        <title>Identification and characterization of Rain, a novel Ras-interacting protein with a unique subcellular localization.</title>
        <authorList>
            <person name="Mitin N.Y."/>
            <person name="Ramocki M.B."/>
            <person name="Zullo A.J."/>
            <person name="Der C.J."/>
            <person name="Konieczny S.F."/>
            <person name="Taparowsky E.J."/>
        </authorList>
    </citation>
    <scope>NUCLEOTIDE SEQUENCE [MRNA]</scope>
    <scope>FUNCTION</scope>
    <scope>INTERACTION WITH HRAS; RAP1A; RAP2; RAF1; RRAS AND RRAS2</scope>
    <scope>SUBCELLULAR LOCATION</scope>
    <scope>TISSUE SPECIFICITY</scope>
    <scope>VARIANT CYS-601</scope>
    <source>
        <tissue>Skeletal muscle</tissue>
    </source>
</reference>
<reference key="2">
    <citation type="journal article" date="2004" name="Genome Res.">
        <title>The status, quality, and expansion of the NIH full-length cDNA project: the Mammalian Gene Collection (MGC).</title>
        <authorList>
            <consortium name="The MGC Project Team"/>
        </authorList>
    </citation>
    <scope>NUCLEOTIDE SEQUENCE [LARGE SCALE MRNA]</scope>
    <source>
        <tissue>Brain</tissue>
    </source>
</reference>
<reference key="3">
    <citation type="journal article" date="2012" name="EMBO J.">
        <title>Genome-wide siRNA screen reveals amino acid starvation-induced autophagy requires SCOC and WAC.</title>
        <authorList>
            <person name="McKnight N.C."/>
            <person name="Jefferies H.B."/>
            <person name="Alemu E.A."/>
            <person name="Saunders R.E."/>
            <person name="Howell M."/>
            <person name="Johansen T."/>
            <person name="Tooze S.A."/>
        </authorList>
    </citation>
    <scope>FUNCTION</scope>
</reference>
<reference key="4">
    <citation type="journal article" date="2014" name="J. Proteomics">
        <title>An enzyme assisted RP-RPLC approach for in-depth analysis of human liver phosphoproteome.</title>
        <authorList>
            <person name="Bian Y."/>
            <person name="Song C."/>
            <person name="Cheng K."/>
            <person name="Dong M."/>
            <person name="Wang F."/>
            <person name="Huang J."/>
            <person name="Sun D."/>
            <person name="Wang L."/>
            <person name="Ye M."/>
            <person name="Zou H."/>
        </authorList>
    </citation>
    <scope>PHOSPHORYLATION [LARGE SCALE ANALYSIS] AT SER-188 AND SER-419</scope>
    <scope>IDENTIFICATION BY MASS SPECTROMETRY [LARGE SCALE ANALYSIS]</scope>
    <source>
        <tissue>Liver</tissue>
    </source>
</reference>
<name>RAIN_HUMAN</name>
<feature type="chain" id="PRO_0000097163" description="Ras-interacting protein 1">
    <location>
        <begin position="1"/>
        <end position="963"/>
    </location>
</feature>
<feature type="domain" description="Ras-associating" evidence="3">
    <location>
        <begin position="144"/>
        <end position="259"/>
    </location>
</feature>
<feature type="domain" description="Dilute" evidence="4">
    <location>
        <begin position="600"/>
        <end position="897"/>
    </location>
</feature>
<feature type="region of interest" description="Disordered" evidence="5">
    <location>
        <begin position="1"/>
        <end position="22"/>
    </location>
</feature>
<feature type="region of interest" description="Disordered" evidence="5">
    <location>
        <begin position="35"/>
        <end position="118"/>
    </location>
</feature>
<feature type="region of interest" description="Disordered" evidence="5">
    <location>
        <begin position="267"/>
        <end position="356"/>
    </location>
</feature>
<feature type="compositionally biased region" description="Basic and acidic residues" evidence="5">
    <location>
        <begin position="1"/>
        <end position="10"/>
    </location>
</feature>
<feature type="compositionally biased region" description="Low complexity" evidence="5">
    <location>
        <begin position="41"/>
        <end position="57"/>
    </location>
</feature>
<feature type="compositionally biased region" description="Gly residues" evidence="5">
    <location>
        <begin position="96"/>
        <end position="113"/>
    </location>
</feature>
<feature type="compositionally biased region" description="Low complexity" evidence="5">
    <location>
        <begin position="290"/>
        <end position="301"/>
    </location>
</feature>
<feature type="compositionally biased region" description="Gly residues" evidence="5">
    <location>
        <begin position="302"/>
        <end position="313"/>
    </location>
</feature>
<feature type="compositionally biased region" description="Low complexity" evidence="5">
    <location>
        <begin position="320"/>
        <end position="333"/>
    </location>
</feature>
<feature type="modified residue" description="Omega-N-methylarginine" evidence="2">
    <location>
        <position position="94"/>
    </location>
</feature>
<feature type="modified residue" description="Phosphoserine" evidence="9">
    <location>
        <position position="188"/>
    </location>
</feature>
<feature type="modified residue" description="Phosphoserine" evidence="2">
    <location>
        <position position="280"/>
    </location>
</feature>
<feature type="modified residue" description="Phosphoserine" evidence="2">
    <location>
        <position position="292"/>
    </location>
</feature>
<feature type="modified residue" description="Phosphoserine" evidence="2">
    <location>
        <position position="326"/>
    </location>
</feature>
<feature type="modified residue" description="Phosphoserine" evidence="2">
    <location>
        <position position="328"/>
    </location>
</feature>
<feature type="modified residue" description="Phosphoserine" evidence="2">
    <location>
        <position position="331"/>
    </location>
</feature>
<feature type="modified residue" description="Phosphoserine" evidence="9">
    <location>
        <position position="419"/>
    </location>
</feature>
<feature type="sequence variant" id="VAR_051302" description="In dbSNP:rs2287922." evidence="6">
    <original>R</original>
    <variation>C</variation>
    <location>
        <position position="601"/>
    </location>
</feature>
<feature type="sequence conflict" description="In Ref. 1; AAR24580." evidence="8" ref="1">
    <original>P</original>
    <variation>R</variation>
    <location>
        <position position="500"/>
    </location>
</feature>
<feature type="sequence conflict" description="In Ref. 1; AAR24580." evidence="8" ref="1">
    <original>PPGPGWA</original>
    <variation>RQPWLG</variation>
    <location>
        <begin position="511"/>
        <end position="517"/>
    </location>
</feature>
<feature type="sequence conflict" description="In Ref. 1; AAR24580." evidence="8" ref="1">
    <original>EL</original>
    <variation>DW</variation>
    <location>
        <begin position="736"/>
        <end position="737"/>
    </location>
</feature>
<feature type="strand" evidence="10">
    <location>
        <begin position="146"/>
        <end position="152"/>
    </location>
</feature>
<feature type="strand" evidence="10">
    <location>
        <begin position="159"/>
        <end position="166"/>
    </location>
</feature>
<feature type="helix" evidence="10">
    <location>
        <begin position="172"/>
        <end position="180"/>
    </location>
</feature>
<feature type="turn" evidence="10">
    <location>
        <begin position="181"/>
        <end position="184"/>
    </location>
</feature>
<feature type="helix" evidence="10">
    <location>
        <begin position="199"/>
        <end position="201"/>
    </location>
</feature>
<feature type="strand" evidence="10">
    <location>
        <begin position="202"/>
        <end position="209"/>
    </location>
</feature>
<feature type="strand" evidence="10">
    <location>
        <begin position="224"/>
        <end position="228"/>
    </location>
</feature>
<feature type="helix" evidence="10">
    <location>
        <begin position="235"/>
        <end position="241"/>
    </location>
</feature>
<feature type="strand" evidence="10">
    <location>
        <begin position="242"/>
        <end position="244"/>
    </location>
</feature>
<feature type="strand" evidence="10">
    <location>
        <begin position="249"/>
        <end position="256"/>
    </location>
</feature>
<feature type="helix" evidence="10">
    <location>
        <begin position="257"/>
        <end position="264"/>
    </location>
</feature>
<comment type="function">
    <text evidence="1 6 7">Required for the proper formation of vascular structures that develop via both vasculogenesis and angiogenesis. Acts as a critical and vascular-specific regulator of GTPase signaling, cell architecture, and adhesion, which is essential for endothelial cell morphogenesis and blood vessel tubulogenesis. Regulates the activity of Rho GTPases in part by recruiting ARHGAP29 and suppressing RhoA signaling and dampening ROCK and MYH9 activities in endothelial cells (By similarity). May act as effector for Golgi-bound HRAS and other Ras-like proteins. May promote HRAS-mediated transformation. Negative regulator of amino acid starvation-induced autophagy.</text>
</comment>
<comment type="subunit">
    <text evidence="1">Interacts with Ras family members that have been activated by GTP binding. Interacts with HRAS, RAP1A, RAP2, RRAS, RAF1 and RRAS2. Interacts with MYH9 and ARHGAP29 (By similarity).</text>
</comment>
<comment type="subcellular location">
    <subcellularLocation>
        <location evidence="6">Cytoplasm</location>
        <location evidence="6">Perinuclear region</location>
    </subcellularLocation>
    <subcellularLocation>
        <location evidence="6">Golgi apparatus</location>
        <location evidence="6">Golgi stack</location>
    </subcellularLocation>
    <text>Associated with perinuclear vesicles. Is recruited to Golgi stacks by activated HRAS.</text>
</comment>
<comment type="tissue specificity">
    <text evidence="6">Highly expressed in heart. Detected at lower levels in placenta and pancreas.</text>
</comment>
<keyword id="KW-0002">3D-structure</keyword>
<keyword id="KW-0037">Angiogenesis</keyword>
<keyword id="KW-0963">Cytoplasm</keyword>
<keyword id="KW-0333">Golgi apparatus</keyword>
<keyword id="KW-0488">Methylation</keyword>
<keyword id="KW-0597">Phosphoprotein</keyword>
<keyword id="KW-1267">Proteomics identification</keyword>
<keyword id="KW-1185">Reference proteome</keyword>
<sequence>MLSGERKEGGSPRFGKLHLPVGLWINSPRKQLAKLGRRWPSAASVKSSSSDTGSRSSEPLPPPPPHVELRRVGAVKAAGGASGSRAKRISQLFRGSGTGTTGSSGAGGPGTPGGAQRWASEKKLPELAAGVAPEPPLATRATAPPGVLKIFGAGLASGANYKSVLATARSTARELVAEALERYGLAGSPGGGPGESSCVDAFALCDALGRPAAAGVGSGEWRAEHLRVLGDSERPLLVQELWRARPGWARRFELRGREEARRLEQEAFGAADSEGTGAPSWRPQKNRSRAASGGAALASPGPGTGSGAPAGSGGKERSENLSLRRSVSELSLQGRRRRQQERRQQALSMAPGAADAQIGTADPGDFDQLTQCLIQAPSNRPYFLLLQGYQDAQDFVVYVMTREQHVFGRGGNSSGRGGSPAPYVDTFLNAPDILPRHCTVRAGPEHPAMVRPSRGAPVTHNGCLLLREAELHPGDLLGLGEHFLFMYKDPRTGGSGPARPPWLPARPGATPPGPGWAFSCRLCGRGLQERGEALAAYLDGREPVLRFRPREEEALLGEIVRAAAAGSGDLPPLGPATLLALCVQHSARELELGHLPRLLGRLARLIKEAVWEKIKEIGDRQPENHPEGVPEVPLTPEAVSVELRPLMLWMANTTELLSFVQEKVLEMEKEADQEDPQLCNDLELCDEAMALLDEVIMCTFQQSVYYLTKTLYSTLPALLDSNPFTAGAELPGPGAELGAMPPGLRPTLGVFQAALELTSQCELHPDLVSQTFGYLFFFSNASLLNSLMERGQGRPFYQWSRAVQIRTNLDLVLDWLQGAGLGDIATEFFRKLSMAVNLLCVPRTSLLKASWSSLRTDHPTLTPAQLHHLLSHYQLGPGRGPPAAWDPPPAEREAVDTGDIFESFSSHPPLILPLGSSRLRLTGPVTDDALHRELRRLRRLLWDLEQQELPANYRHGPPVATSP</sequence>
<accession>Q5U651</accession>
<accession>Q6U676</accession>
<proteinExistence type="evidence at protein level"/>
<protein>
    <recommendedName>
        <fullName>Ras-interacting protein 1</fullName>
        <shortName>Rain</shortName>
    </recommendedName>
</protein>
<gene>
    <name type="primary">RASIP1</name>
</gene>